<comment type="function">
    <text evidence="1">Catalyzes the attachment of threonine to tRNA(Thr) in a two-step reaction: L-threonine is first activated by ATP to form Thr-AMP and then transferred to the acceptor end of tRNA(Thr). Also edits incorrectly charged L-seryl-tRNA(Thr).</text>
</comment>
<comment type="catalytic activity">
    <reaction evidence="1">
        <text>tRNA(Thr) + L-threonine + ATP = L-threonyl-tRNA(Thr) + AMP + diphosphate + H(+)</text>
        <dbReference type="Rhea" id="RHEA:24624"/>
        <dbReference type="Rhea" id="RHEA-COMP:9670"/>
        <dbReference type="Rhea" id="RHEA-COMP:9704"/>
        <dbReference type="ChEBI" id="CHEBI:15378"/>
        <dbReference type="ChEBI" id="CHEBI:30616"/>
        <dbReference type="ChEBI" id="CHEBI:33019"/>
        <dbReference type="ChEBI" id="CHEBI:57926"/>
        <dbReference type="ChEBI" id="CHEBI:78442"/>
        <dbReference type="ChEBI" id="CHEBI:78534"/>
        <dbReference type="ChEBI" id="CHEBI:456215"/>
        <dbReference type="EC" id="6.1.1.3"/>
    </reaction>
</comment>
<comment type="cofactor">
    <cofactor evidence="1">
        <name>Zn(2+)</name>
        <dbReference type="ChEBI" id="CHEBI:29105"/>
    </cofactor>
    <text evidence="1">Binds 1 zinc ion per subunit.</text>
</comment>
<comment type="subunit">
    <text evidence="1">Homodimer.</text>
</comment>
<comment type="subcellular location">
    <subcellularLocation>
        <location evidence="1">Cytoplasm</location>
    </subcellularLocation>
</comment>
<comment type="similarity">
    <text evidence="1">Belongs to the class-II aminoacyl-tRNA synthetase family.</text>
</comment>
<reference key="1">
    <citation type="submission" date="2006-12" db="EMBL/GenBank/DDBJ databases">
        <authorList>
            <person name="Fouts D.E."/>
            <person name="Nelson K.E."/>
            <person name="Sebastian Y."/>
        </authorList>
    </citation>
    <scope>NUCLEOTIDE SEQUENCE [LARGE SCALE GENOMIC DNA]</scope>
    <source>
        <strain>81-176</strain>
    </source>
</reference>
<dbReference type="EC" id="6.1.1.3" evidence="1"/>
<dbReference type="EMBL" id="CP000538">
    <property type="protein sequence ID" value="EAQ73340.1"/>
    <property type="molecule type" value="Genomic_DNA"/>
</dbReference>
<dbReference type="RefSeq" id="WP_002869067.1">
    <property type="nucleotide sequence ID" value="NC_008787.1"/>
</dbReference>
<dbReference type="SMR" id="A1VXT5"/>
<dbReference type="KEGG" id="cjj:CJJ81176_0238"/>
<dbReference type="eggNOG" id="COG0441">
    <property type="taxonomic scope" value="Bacteria"/>
</dbReference>
<dbReference type="HOGENOM" id="CLU_008554_0_1_7"/>
<dbReference type="Proteomes" id="UP000000646">
    <property type="component" value="Chromosome"/>
</dbReference>
<dbReference type="GO" id="GO:0005829">
    <property type="term" value="C:cytosol"/>
    <property type="evidence" value="ECO:0007669"/>
    <property type="project" value="TreeGrafter"/>
</dbReference>
<dbReference type="GO" id="GO:0005524">
    <property type="term" value="F:ATP binding"/>
    <property type="evidence" value="ECO:0007669"/>
    <property type="project" value="UniProtKB-UniRule"/>
</dbReference>
<dbReference type="GO" id="GO:0046872">
    <property type="term" value="F:metal ion binding"/>
    <property type="evidence" value="ECO:0007669"/>
    <property type="project" value="UniProtKB-KW"/>
</dbReference>
<dbReference type="GO" id="GO:0004829">
    <property type="term" value="F:threonine-tRNA ligase activity"/>
    <property type="evidence" value="ECO:0007669"/>
    <property type="project" value="UniProtKB-UniRule"/>
</dbReference>
<dbReference type="GO" id="GO:0000049">
    <property type="term" value="F:tRNA binding"/>
    <property type="evidence" value="ECO:0007669"/>
    <property type="project" value="UniProtKB-KW"/>
</dbReference>
<dbReference type="GO" id="GO:0006435">
    <property type="term" value="P:threonyl-tRNA aminoacylation"/>
    <property type="evidence" value="ECO:0007669"/>
    <property type="project" value="UniProtKB-UniRule"/>
</dbReference>
<dbReference type="CDD" id="cd00860">
    <property type="entry name" value="ThrRS_anticodon"/>
    <property type="match status" value="1"/>
</dbReference>
<dbReference type="CDD" id="cd00771">
    <property type="entry name" value="ThrRS_core"/>
    <property type="match status" value="1"/>
</dbReference>
<dbReference type="FunFam" id="3.30.930.10:FF:000019">
    <property type="entry name" value="Threonine--tRNA ligase"/>
    <property type="match status" value="1"/>
</dbReference>
<dbReference type="FunFam" id="3.30.980.10:FF:000005">
    <property type="entry name" value="Threonyl-tRNA synthetase, mitochondrial"/>
    <property type="match status" value="1"/>
</dbReference>
<dbReference type="Gene3D" id="3.30.54.20">
    <property type="match status" value="1"/>
</dbReference>
<dbReference type="Gene3D" id="3.40.50.800">
    <property type="entry name" value="Anticodon-binding domain"/>
    <property type="match status" value="1"/>
</dbReference>
<dbReference type="Gene3D" id="3.30.930.10">
    <property type="entry name" value="Bira Bifunctional Protein, Domain 2"/>
    <property type="match status" value="1"/>
</dbReference>
<dbReference type="Gene3D" id="3.30.980.10">
    <property type="entry name" value="Threonyl-trna Synthetase, Chain A, domain 2"/>
    <property type="match status" value="1"/>
</dbReference>
<dbReference type="HAMAP" id="MF_00184">
    <property type="entry name" value="Thr_tRNA_synth"/>
    <property type="match status" value="1"/>
</dbReference>
<dbReference type="InterPro" id="IPR002314">
    <property type="entry name" value="aa-tRNA-synt_IIb"/>
</dbReference>
<dbReference type="InterPro" id="IPR006195">
    <property type="entry name" value="aa-tRNA-synth_II"/>
</dbReference>
<dbReference type="InterPro" id="IPR045864">
    <property type="entry name" value="aa-tRNA-synth_II/BPL/LPL"/>
</dbReference>
<dbReference type="InterPro" id="IPR004154">
    <property type="entry name" value="Anticodon-bd"/>
</dbReference>
<dbReference type="InterPro" id="IPR036621">
    <property type="entry name" value="Anticodon-bd_dom_sf"/>
</dbReference>
<dbReference type="InterPro" id="IPR002320">
    <property type="entry name" value="Thr-tRNA-ligase_IIa"/>
</dbReference>
<dbReference type="InterPro" id="IPR018163">
    <property type="entry name" value="Thr/Ala-tRNA-synth_IIc_edit"/>
</dbReference>
<dbReference type="InterPro" id="IPR047246">
    <property type="entry name" value="ThrRS_anticodon"/>
</dbReference>
<dbReference type="InterPro" id="IPR033728">
    <property type="entry name" value="ThrRS_core"/>
</dbReference>
<dbReference type="InterPro" id="IPR012947">
    <property type="entry name" value="tRNA_SAD"/>
</dbReference>
<dbReference type="NCBIfam" id="TIGR00418">
    <property type="entry name" value="thrS"/>
    <property type="match status" value="1"/>
</dbReference>
<dbReference type="PANTHER" id="PTHR11451:SF44">
    <property type="entry name" value="THREONINE--TRNA LIGASE, CHLOROPLASTIC_MITOCHONDRIAL 2"/>
    <property type="match status" value="1"/>
</dbReference>
<dbReference type="PANTHER" id="PTHR11451">
    <property type="entry name" value="THREONINE-TRNA LIGASE"/>
    <property type="match status" value="1"/>
</dbReference>
<dbReference type="Pfam" id="PF03129">
    <property type="entry name" value="HGTP_anticodon"/>
    <property type="match status" value="1"/>
</dbReference>
<dbReference type="Pfam" id="PF00587">
    <property type="entry name" value="tRNA-synt_2b"/>
    <property type="match status" value="1"/>
</dbReference>
<dbReference type="Pfam" id="PF07973">
    <property type="entry name" value="tRNA_SAD"/>
    <property type="match status" value="1"/>
</dbReference>
<dbReference type="PRINTS" id="PR01047">
    <property type="entry name" value="TRNASYNTHTHR"/>
</dbReference>
<dbReference type="SMART" id="SM00863">
    <property type="entry name" value="tRNA_SAD"/>
    <property type="match status" value="1"/>
</dbReference>
<dbReference type="SUPFAM" id="SSF52954">
    <property type="entry name" value="Class II aaRS ABD-related"/>
    <property type="match status" value="1"/>
</dbReference>
<dbReference type="SUPFAM" id="SSF55681">
    <property type="entry name" value="Class II aaRS and biotin synthetases"/>
    <property type="match status" value="1"/>
</dbReference>
<dbReference type="SUPFAM" id="SSF55186">
    <property type="entry name" value="ThrRS/AlaRS common domain"/>
    <property type="match status" value="1"/>
</dbReference>
<dbReference type="PROSITE" id="PS50862">
    <property type="entry name" value="AA_TRNA_LIGASE_II"/>
    <property type="match status" value="1"/>
</dbReference>
<feature type="chain" id="PRO_1000020363" description="Threonine--tRNA ligase">
    <location>
        <begin position="1"/>
        <end position="602"/>
    </location>
</feature>
<feature type="region of interest" description="Catalytic" evidence="1">
    <location>
        <begin position="208"/>
        <end position="499"/>
    </location>
</feature>
<feature type="binding site" evidence="1">
    <location>
        <position position="300"/>
    </location>
    <ligand>
        <name>Zn(2+)</name>
        <dbReference type="ChEBI" id="CHEBI:29105"/>
    </ligand>
</feature>
<feature type="binding site" evidence="1">
    <location>
        <position position="351"/>
    </location>
    <ligand>
        <name>Zn(2+)</name>
        <dbReference type="ChEBI" id="CHEBI:29105"/>
    </ligand>
</feature>
<feature type="binding site" evidence="1">
    <location>
        <position position="476"/>
    </location>
    <ligand>
        <name>Zn(2+)</name>
        <dbReference type="ChEBI" id="CHEBI:29105"/>
    </ligand>
</feature>
<evidence type="ECO:0000255" key="1">
    <source>
        <dbReference type="HAMAP-Rule" id="MF_00184"/>
    </source>
</evidence>
<name>SYT_CAMJJ</name>
<organism>
    <name type="scientific">Campylobacter jejuni subsp. jejuni serotype O:23/36 (strain 81-176)</name>
    <dbReference type="NCBI Taxonomy" id="354242"/>
    <lineage>
        <taxon>Bacteria</taxon>
        <taxon>Pseudomonadati</taxon>
        <taxon>Campylobacterota</taxon>
        <taxon>Epsilonproteobacteria</taxon>
        <taxon>Campylobacterales</taxon>
        <taxon>Campylobacteraceae</taxon>
        <taxon>Campylobacter</taxon>
    </lineage>
</organism>
<protein>
    <recommendedName>
        <fullName evidence="1">Threonine--tRNA ligase</fullName>
        <ecNumber evidence="1">6.1.1.3</ecNumber>
    </recommendedName>
    <alternativeName>
        <fullName evidence="1">Threonyl-tRNA synthetase</fullName>
        <shortName evidence="1">ThrRS</shortName>
    </alternativeName>
</protein>
<proteinExistence type="inferred from homology"/>
<sequence>MEKEVIAYLDNETIIDSQSVKNTNLKEIYFDNSKESLEVIRHSCAHLMAQAIKSLYPEAKFFVGPVIEDGFYYDFRVESKIGEEDLVKIEKKMKELAEAKIEISKYEITKSEALAKFQNDDLKQEVLLRIPDGAVSIYKQGEFEDLCRGPHAPNTKFLRFFKLTRVAGAYLGGDEKREMLTRIYGTAFADKESLKEYLTIIEEAKKRDHRKLGTELKLFTFDDEIGGGLPIWLSNGARLRSKLEHMLYKIHRLRGYEPVRGPELLKADAWKISGHYANYKENMYFTQIDEQEYGIKPMNCVGHIKIYQSDVRSYRDLPLKFFEYGVVHRHEKSGVLHGLFRVREFTQDDAHIFCMPSQIKEQVLEILAFVDNLMKLFDFSYEMEISTKPEKAIGDDEIWEIATKALKEALNEQGLKYGIDEGGGAFYGPKIDIKITDALKRKWQCGTVQVDFNLPSRFKLEYTDSDNEKKQPVMLHRAILGSFERFIGILTEHCAGEFPFFIAPTAVGIVPIGEAHIAYAKEIQKELLELNIDSEVYEKNESLSKKIRIAEKQKLPMILVLGDDEVVKRSVALRDRRAKEQKNLSLDEFIKLVKEKMSEVHF</sequence>
<accession>A1VXT5</accession>
<gene>
    <name evidence="1" type="primary">thrS</name>
    <name type="ordered locus">CJJ81176_0238</name>
</gene>
<keyword id="KW-0030">Aminoacyl-tRNA synthetase</keyword>
<keyword id="KW-0067">ATP-binding</keyword>
<keyword id="KW-0963">Cytoplasm</keyword>
<keyword id="KW-0436">Ligase</keyword>
<keyword id="KW-0479">Metal-binding</keyword>
<keyword id="KW-0547">Nucleotide-binding</keyword>
<keyword id="KW-0648">Protein biosynthesis</keyword>
<keyword id="KW-0694">RNA-binding</keyword>
<keyword id="KW-0820">tRNA-binding</keyword>
<keyword id="KW-0862">Zinc</keyword>